<name>CEF1_YEAST</name>
<dbReference type="EMBL" id="Z49809">
    <property type="protein sequence ID" value="CAA89928.1"/>
    <property type="molecule type" value="Genomic_DNA"/>
</dbReference>
<dbReference type="EMBL" id="AY693142">
    <property type="protein sequence ID" value="AAT93161.1"/>
    <property type="molecule type" value="Genomic_DNA"/>
</dbReference>
<dbReference type="EMBL" id="BK006946">
    <property type="protein sequence ID" value="DAA10112.1"/>
    <property type="molecule type" value="Genomic_DNA"/>
</dbReference>
<dbReference type="PIR" id="S55095">
    <property type="entry name" value="S55095"/>
</dbReference>
<dbReference type="RefSeq" id="NP_013940.1">
    <property type="nucleotide sequence ID" value="NM_001182720.1"/>
</dbReference>
<dbReference type="PDB" id="5GM6">
    <property type="method" value="EM"/>
    <property type="resolution" value="3.50 A"/>
    <property type="chains" value="c=1-253, c=482-587"/>
</dbReference>
<dbReference type="PDB" id="5GMK">
    <property type="method" value="EM"/>
    <property type="resolution" value="3.40 A"/>
    <property type="chains" value="c=1-253, c=482-587"/>
</dbReference>
<dbReference type="PDB" id="5LJ3">
    <property type="method" value="EM"/>
    <property type="resolution" value="3.80 A"/>
    <property type="chains" value="O=1-590"/>
</dbReference>
<dbReference type="PDB" id="5LJ5">
    <property type="method" value="EM"/>
    <property type="resolution" value="3.80 A"/>
    <property type="chains" value="O=1-590"/>
</dbReference>
<dbReference type="PDB" id="5LQW">
    <property type="method" value="EM"/>
    <property type="resolution" value="5.80 A"/>
    <property type="chains" value="W=1-590"/>
</dbReference>
<dbReference type="PDB" id="5MPS">
    <property type="method" value="EM"/>
    <property type="resolution" value="3.85 A"/>
    <property type="chains" value="O=1-590"/>
</dbReference>
<dbReference type="PDB" id="5MQ0">
    <property type="method" value="EM"/>
    <property type="resolution" value="4.17 A"/>
    <property type="chains" value="O=1-590"/>
</dbReference>
<dbReference type="PDB" id="5WSG">
    <property type="method" value="EM"/>
    <property type="resolution" value="4.00 A"/>
    <property type="chains" value="c=9-253, c=482-587"/>
</dbReference>
<dbReference type="PDB" id="5Y88">
    <property type="method" value="EM"/>
    <property type="resolution" value="3.70 A"/>
    <property type="chains" value="J=1-590"/>
</dbReference>
<dbReference type="PDB" id="5YLZ">
    <property type="method" value="EM"/>
    <property type="resolution" value="3.60 A"/>
    <property type="chains" value="J=1-590"/>
</dbReference>
<dbReference type="PDB" id="6BK8">
    <property type="method" value="EM"/>
    <property type="resolution" value="3.30 A"/>
    <property type="chains" value="S=1-590"/>
</dbReference>
<dbReference type="PDB" id="6EXN">
    <property type="method" value="EM"/>
    <property type="resolution" value="3.70 A"/>
    <property type="chains" value="O=1-590"/>
</dbReference>
<dbReference type="PDB" id="6J6G">
    <property type="method" value="EM"/>
    <property type="resolution" value="3.20 A"/>
    <property type="chains" value="c=1-590"/>
</dbReference>
<dbReference type="PDB" id="6J6H">
    <property type="method" value="EM"/>
    <property type="resolution" value="3.60 A"/>
    <property type="chains" value="c=1-590"/>
</dbReference>
<dbReference type="PDB" id="6J6N">
    <property type="method" value="EM"/>
    <property type="resolution" value="3.86 A"/>
    <property type="chains" value="c=1-590"/>
</dbReference>
<dbReference type="PDB" id="6J6Q">
    <property type="method" value="EM"/>
    <property type="resolution" value="3.70 A"/>
    <property type="chains" value="c=1-590"/>
</dbReference>
<dbReference type="PDB" id="7DCO">
    <property type="method" value="EM"/>
    <property type="resolution" value="2.50 A"/>
    <property type="chains" value="L=1-590"/>
</dbReference>
<dbReference type="PDB" id="9DTR">
    <property type="method" value="EM"/>
    <property type="resolution" value="2.31 A"/>
    <property type="chains" value="O=1-590"/>
</dbReference>
<dbReference type="PDBsum" id="5GM6"/>
<dbReference type="PDBsum" id="5GMK"/>
<dbReference type="PDBsum" id="5LJ3"/>
<dbReference type="PDBsum" id="5LJ5"/>
<dbReference type="PDBsum" id="5LQW"/>
<dbReference type="PDBsum" id="5MPS"/>
<dbReference type="PDBsum" id="5MQ0"/>
<dbReference type="PDBsum" id="5WSG"/>
<dbReference type="PDBsum" id="5Y88"/>
<dbReference type="PDBsum" id="5YLZ"/>
<dbReference type="PDBsum" id="6BK8"/>
<dbReference type="PDBsum" id="6EXN"/>
<dbReference type="PDBsum" id="6J6G"/>
<dbReference type="PDBsum" id="6J6H"/>
<dbReference type="PDBsum" id="6J6N"/>
<dbReference type="PDBsum" id="6J6Q"/>
<dbReference type="PDBsum" id="7DCO"/>
<dbReference type="PDBsum" id="9DTR"/>
<dbReference type="EMDB" id="EMD-0686"/>
<dbReference type="EMDB" id="EMD-0687"/>
<dbReference type="EMDB" id="EMD-0691"/>
<dbReference type="EMDB" id="EMD-0692"/>
<dbReference type="EMDB" id="EMD-30637"/>
<dbReference type="EMDB" id="EMD-3539"/>
<dbReference type="EMDB" id="EMD-3541"/>
<dbReference type="EMDB" id="EMD-3979"/>
<dbReference type="EMDB" id="EMD-4057"/>
<dbReference type="EMDB" id="EMD-47157"/>
<dbReference type="EMDB" id="EMD-6817"/>
<dbReference type="EMDB" id="EMD-6839"/>
<dbReference type="EMDB" id="EMD-7109"/>
<dbReference type="EMDB" id="EMD-9524"/>
<dbReference type="EMDB" id="EMD-9525"/>
<dbReference type="SMR" id="Q03654"/>
<dbReference type="BioGRID" id="35391">
    <property type="interactions" value="316"/>
</dbReference>
<dbReference type="ComplexPortal" id="CPX-1651">
    <property type="entry name" value="PRP19-associated complex"/>
</dbReference>
<dbReference type="ComplexPortal" id="CPX-1885">
    <property type="entry name" value="NineTeen complex"/>
</dbReference>
<dbReference type="DIP" id="DIP-1113N"/>
<dbReference type="FunCoup" id="Q03654">
    <property type="interactions" value="174"/>
</dbReference>
<dbReference type="IntAct" id="Q03654">
    <property type="interactions" value="58"/>
</dbReference>
<dbReference type="MINT" id="Q03654"/>
<dbReference type="STRING" id="4932.YMR213W"/>
<dbReference type="iPTMnet" id="Q03654"/>
<dbReference type="PaxDb" id="4932-YMR213W"/>
<dbReference type="PeptideAtlas" id="Q03654"/>
<dbReference type="EnsemblFungi" id="YMR213W_mRNA">
    <property type="protein sequence ID" value="YMR213W"/>
    <property type="gene ID" value="YMR213W"/>
</dbReference>
<dbReference type="GeneID" id="855253"/>
<dbReference type="KEGG" id="sce:YMR213W"/>
<dbReference type="AGR" id="SGD:S000004826"/>
<dbReference type="SGD" id="S000004826">
    <property type="gene designation" value="CEF1"/>
</dbReference>
<dbReference type="VEuPathDB" id="FungiDB:YMR213W"/>
<dbReference type="eggNOG" id="KOG0050">
    <property type="taxonomic scope" value="Eukaryota"/>
</dbReference>
<dbReference type="GeneTree" id="ENSGT00550000074922"/>
<dbReference type="HOGENOM" id="CLU_009082_2_1_1"/>
<dbReference type="InParanoid" id="Q03654"/>
<dbReference type="OMA" id="KYGTHQW"/>
<dbReference type="OrthoDB" id="1410009at2759"/>
<dbReference type="BioCyc" id="YEAST:G3O-32896-MONOMER"/>
<dbReference type="BioGRID-ORCS" id="855253">
    <property type="hits" value="0 hits in 10 CRISPR screens"/>
</dbReference>
<dbReference type="PRO" id="PR:Q03654"/>
<dbReference type="Proteomes" id="UP000002311">
    <property type="component" value="Chromosome XIII"/>
</dbReference>
<dbReference type="RNAct" id="Q03654">
    <property type="molecule type" value="protein"/>
</dbReference>
<dbReference type="GO" id="GO:0005737">
    <property type="term" value="C:cytoplasm"/>
    <property type="evidence" value="ECO:0007669"/>
    <property type="project" value="UniProtKB-SubCell"/>
</dbReference>
<dbReference type="GO" id="GO:0000974">
    <property type="term" value="C:Prp19 complex"/>
    <property type="evidence" value="ECO:0000314"/>
    <property type="project" value="SGD"/>
</dbReference>
<dbReference type="GO" id="GO:0005681">
    <property type="term" value="C:spliceosomal complex"/>
    <property type="evidence" value="ECO:0000318"/>
    <property type="project" value="GO_Central"/>
</dbReference>
<dbReference type="GO" id="GO:0071006">
    <property type="term" value="C:U2-type catalytic step 1 spliceosome"/>
    <property type="evidence" value="ECO:0000314"/>
    <property type="project" value="SGD"/>
</dbReference>
<dbReference type="GO" id="GO:0003677">
    <property type="term" value="F:DNA binding"/>
    <property type="evidence" value="ECO:0007669"/>
    <property type="project" value="UniProtKB-KW"/>
</dbReference>
<dbReference type="GO" id="GO:0000350">
    <property type="term" value="P:generation of catalytic spliceosome for second transesterification step"/>
    <property type="evidence" value="ECO:0000315"/>
    <property type="project" value="SGD"/>
</dbReference>
<dbReference type="GO" id="GO:0000398">
    <property type="term" value="P:mRNA splicing, via spliceosome"/>
    <property type="evidence" value="ECO:0000315"/>
    <property type="project" value="SGD"/>
</dbReference>
<dbReference type="CDD" id="cd00167">
    <property type="entry name" value="SANT"/>
    <property type="match status" value="1"/>
</dbReference>
<dbReference type="CDD" id="cd11659">
    <property type="entry name" value="SANT_CDC5_II"/>
    <property type="match status" value="1"/>
</dbReference>
<dbReference type="Gene3D" id="1.10.10.60">
    <property type="entry name" value="Homeodomain-like"/>
    <property type="match status" value="2"/>
</dbReference>
<dbReference type="InterPro" id="IPR047242">
    <property type="entry name" value="CDC5L/Cef1"/>
</dbReference>
<dbReference type="InterPro" id="IPR021786">
    <property type="entry name" value="Cdc5p/Cef1_C"/>
</dbReference>
<dbReference type="InterPro" id="IPR009057">
    <property type="entry name" value="Homeodomain-like_sf"/>
</dbReference>
<dbReference type="InterPro" id="IPR017930">
    <property type="entry name" value="Myb_dom"/>
</dbReference>
<dbReference type="InterPro" id="IPR001005">
    <property type="entry name" value="SANT/Myb"/>
</dbReference>
<dbReference type="InterPro" id="IPR047240">
    <property type="entry name" value="SANT_CDC5L_II"/>
</dbReference>
<dbReference type="PANTHER" id="PTHR45885">
    <property type="entry name" value="CELL DIVISION CYCLE 5-LIKE PROTEIN"/>
    <property type="match status" value="1"/>
</dbReference>
<dbReference type="PANTHER" id="PTHR45885:SF1">
    <property type="entry name" value="CELL DIVISION CYCLE 5-LIKE PROTEIN"/>
    <property type="match status" value="1"/>
</dbReference>
<dbReference type="Pfam" id="PF11831">
    <property type="entry name" value="Myb_Cef"/>
    <property type="match status" value="1"/>
</dbReference>
<dbReference type="Pfam" id="PF00249">
    <property type="entry name" value="Myb_DNA-binding"/>
    <property type="match status" value="2"/>
</dbReference>
<dbReference type="SMART" id="SM00717">
    <property type="entry name" value="SANT"/>
    <property type="match status" value="2"/>
</dbReference>
<dbReference type="SUPFAM" id="SSF46689">
    <property type="entry name" value="Homeodomain-like"/>
    <property type="match status" value="1"/>
</dbReference>
<dbReference type="PROSITE" id="PS51294">
    <property type="entry name" value="HTH_MYB"/>
    <property type="match status" value="2"/>
</dbReference>
<evidence type="ECO:0000255" key="1">
    <source>
        <dbReference type="PROSITE-ProRule" id="PRU00625"/>
    </source>
</evidence>
<evidence type="ECO:0000256" key="2">
    <source>
        <dbReference type="SAM" id="MobiDB-lite"/>
    </source>
</evidence>
<evidence type="ECO:0000269" key="3">
    <source>
    </source>
</evidence>
<evidence type="ECO:0000269" key="4">
    <source>
    </source>
</evidence>
<evidence type="ECO:0000269" key="5">
    <source>
    </source>
</evidence>
<evidence type="ECO:0000269" key="6">
    <source>
    </source>
</evidence>
<evidence type="ECO:0000269" key="7">
    <source>
    </source>
</evidence>
<evidence type="ECO:0000269" key="8">
    <source>
    </source>
</evidence>
<evidence type="ECO:0000269" key="9">
    <source>
    </source>
</evidence>
<evidence type="ECO:0000269" key="10">
    <source>
    </source>
</evidence>
<evidence type="ECO:0000269" key="11">
    <source>
    </source>
</evidence>
<evidence type="ECO:0000269" key="12">
    <source>
    </source>
</evidence>
<evidence type="ECO:0000269" key="13">
    <source>
    </source>
</evidence>
<evidence type="ECO:0000305" key="14"/>
<evidence type="ECO:0007829" key="15">
    <source>
        <dbReference type="PDB" id="5GMK"/>
    </source>
</evidence>
<evidence type="ECO:0007829" key="16">
    <source>
        <dbReference type="PDB" id="6J6G"/>
    </source>
</evidence>
<evidence type="ECO:0007829" key="17">
    <source>
        <dbReference type="PDB" id="9DTR"/>
    </source>
</evidence>
<reference key="1">
    <citation type="journal article" date="1997" name="Nature">
        <title>The nucleotide sequence of Saccharomyces cerevisiae chromosome XIII.</title>
        <authorList>
            <person name="Bowman S."/>
            <person name="Churcher C.M."/>
            <person name="Badcock K."/>
            <person name="Brown D."/>
            <person name="Chillingworth T."/>
            <person name="Connor R."/>
            <person name="Dedman K."/>
            <person name="Devlin K."/>
            <person name="Gentles S."/>
            <person name="Hamlin N."/>
            <person name="Hunt S."/>
            <person name="Jagels K."/>
            <person name="Lye G."/>
            <person name="Moule S."/>
            <person name="Odell C."/>
            <person name="Pearson D."/>
            <person name="Rajandream M.A."/>
            <person name="Rice P."/>
            <person name="Skelton J."/>
            <person name="Walsh S.V."/>
            <person name="Whitehead S."/>
            <person name="Barrell B.G."/>
        </authorList>
    </citation>
    <scope>NUCLEOTIDE SEQUENCE [LARGE SCALE GENOMIC DNA]</scope>
    <source>
        <strain>ATCC 204508 / S288c</strain>
    </source>
</reference>
<reference key="2">
    <citation type="journal article" date="2014" name="G3 (Bethesda)">
        <title>The reference genome sequence of Saccharomyces cerevisiae: Then and now.</title>
        <authorList>
            <person name="Engel S.R."/>
            <person name="Dietrich F.S."/>
            <person name="Fisk D.G."/>
            <person name="Binkley G."/>
            <person name="Balakrishnan R."/>
            <person name="Costanzo M.C."/>
            <person name="Dwight S.S."/>
            <person name="Hitz B.C."/>
            <person name="Karra K."/>
            <person name="Nash R.S."/>
            <person name="Weng S."/>
            <person name="Wong E.D."/>
            <person name="Lloyd P."/>
            <person name="Skrzypek M.S."/>
            <person name="Miyasato S.R."/>
            <person name="Simison M."/>
            <person name="Cherry J.M."/>
        </authorList>
    </citation>
    <scope>GENOME REANNOTATION</scope>
    <source>
        <strain>ATCC 204508 / S288c</strain>
    </source>
</reference>
<reference key="3">
    <citation type="journal article" date="2007" name="Genome Res.">
        <title>Approaching a complete repository of sequence-verified protein-encoding clones for Saccharomyces cerevisiae.</title>
        <authorList>
            <person name="Hu Y."/>
            <person name="Rolfs A."/>
            <person name="Bhullar B."/>
            <person name="Murthy T.V.S."/>
            <person name="Zhu C."/>
            <person name="Berger M.F."/>
            <person name="Camargo A.A."/>
            <person name="Kelley F."/>
            <person name="McCarron S."/>
            <person name="Jepson D."/>
            <person name="Richardson A."/>
            <person name="Raphael J."/>
            <person name="Moreira D."/>
            <person name="Taycher E."/>
            <person name="Zuo D."/>
            <person name="Mohr S."/>
            <person name="Kane M.F."/>
            <person name="Williamson J."/>
            <person name="Simpson A.J.G."/>
            <person name="Bulyk M.L."/>
            <person name="Harlow E."/>
            <person name="Marsischky G."/>
            <person name="Kolodner R.D."/>
            <person name="LaBaer J."/>
        </authorList>
    </citation>
    <scope>NUCLEOTIDE SEQUENCE [GENOMIC DNA]</scope>
    <source>
        <strain>ATCC 204508 / S288c</strain>
    </source>
</reference>
<reference key="4">
    <citation type="journal article" date="1999" name="J. Biol. Chem.">
        <title>Cef1p is a component of the Prp19p-associated complex and essential for pre-mRNA splicing.</title>
        <authorList>
            <person name="Tsai W.-Y."/>
            <person name="Chow Y.-T."/>
            <person name="Chen H.-R."/>
            <person name="Huang K.-T."/>
            <person name="Hong R.-I."/>
            <person name="Jan S.-P."/>
            <person name="Kuo N.-Y."/>
            <person name="Tsao T.Y."/>
            <person name="Chen C.-H."/>
            <person name="Cheng S.-C."/>
        </authorList>
    </citation>
    <scope>PROTEIN SEQUENCE OF 3-16</scope>
    <scope>FUNCTION</scope>
    <scope>DOMAIN</scope>
    <scope>IDENTIFICATION IN THE PRP19-ASSOCIATED COMPLEX</scope>
</reference>
<reference key="5">
    <citation type="journal article" date="2002" name="Mol. Cell. Biol.">
        <title>Removal of a single alpha-tubulin gene intron suppresses cell cycle arrest phenotypes of splicing factor mutations in Saccharomyces cerevisiae.</title>
        <authorList>
            <person name="Burns C.G."/>
            <person name="Ohi R."/>
            <person name="Mehta S."/>
            <person name="O'Toole E.T."/>
            <person name="Winey M."/>
            <person name="Clark T.A."/>
            <person name="Sugnet C.W."/>
            <person name="Ares M. Jr."/>
            <person name="Gould K.L."/>
        </authorList>
    </citation>
    <scope>FUNCTION</scope>
    <scope>MUTAGENESIS OF TRP-52 AND TRP-84</scope>
</reference>
<reference key="6">
    <citation type="journal article" date="1998" name="Mol. Cell. Biol.">
        <title>Snt309p, a component of the Prp19p-associated complex that interacts with Prp19p and associates with the spliceosome simultaneously with or immediately after dissociation of U4 in the same manner as Prp19p.</title>
        <authorList>
            <person name="Chen H.-R."/>
            <person name="Jan S.-P."/>
            <person name="Tsao T.Y."/>
            <person name="Sheu Y.-J."/>
            <person name="Banroques J."/>
            <person name="Cheng S.-C."/>
        </authorList>
    </citation>
    <scope>INTERACTION WITH PRP19</scope>
    <scope>IDENTIFICATION IN THE PRP19-ASSOCIATED COMPLEX</scope>
</reference>
<reference key="7">
    <citation type="journal article" date="1998" name="Mol. Cell. Biol.">
        <title>Myb-related Schizosaccharomyces pombe cdc5p is structurally and functionally conserved in eukaryotes.</title>
        <authorList>
            <person name="Ohi R."/>
            <person name="Feoktistova A."/>
            <person name="McCann S."/>
            <person name="Valentine V."/>
            <person name="Look A.T."/>
            <person name="Lipsick J.S."/>
            <person name="Gould K.L."/>
        </authorList>
    </citation>
    <scope>FUNCTION</scope>
    <scope>MUTAGENESIS OF TRP-33; TRP-52; TRP-84 AND TYR-102</scope>
</reference>
<reference key="8">
    <citation type="journal article" date="1999" name="Proc. Natl. Acad. Sci. U.S.A.">
        <title>Evidence that Myb-related CDC5 proteins are required for pre-mRNA splicing.</title>
        <authorList>
            <person name="Burns C.G."/>
            <person name="Ohi R."/>
            <person name="Krainer A.R."/>
            <person name="Gould K.L."/>
        </authorList>
    </citation>
    <scope>FUNCTION</scope>
</reference>
<reference key="9">
    <citation type="journal article" date="2000" name="Genetics">
        <title>Genetic and physical interactions between factors involved in both cell cycle progression and pre-mRNA splicing in Saccharomyces cerevisiae.</title>
        <authorList>
            <person name="Ben-Yehuda S."/>
            <person name="Dix I."/>
            <person name="Russell C.S."/>
            <person name="McGarvey M."/>
            <person name="Beggs J.D."/>
            <person name="Kupiec M."/>
        </authorList>
    </citation>
    <scope>INTERACTION WITH CLF1; ISY1; NTC20; SYF1 AND SYF2</scope>
</reference>
<reference key="10">
    <citation type="journal article" date="2001" name="J. Biol. Chem.">
        <title>Identification and characterization of two novel components of the Prp19p-associated complex, Ntc30p and Ntc20p.</title>
        <authorList>
            <person name="Chen C.-H."/>
            <person name="Tsai W.-Y."/>
            <person name="Chen H.-R."/>
            <person name="Wang C.-H."/>
            <person name="Cheng S.-C."/>
        </authorList>
    </citation>
    <scope>INTERACTION WITH ISY1; NTC20 AND PRP19</scope>
</reference>
<reference key="11">
    <citation type="journal article" date="2002" name="Mol. Cell. Biol.">
        <title>Proteomics analysis reveals stable multiprotein complexes in both fission and budding yeasts containing Myb-related Cdc5p/Cef1p, novel pre-mRNA splicing factors, and snRNAs.</title>
        <authorList>
            <person name="Ohi M.D."/>
            <person name="Link A.J."/>
            <person name="Ren L."/>
            <person name="Jennings J.L."/>
            <person name="McDonald W.H."/>
            <person name="Gould K.L."/>
        </authorList>
    </citation>
    <scope>IDENTIFICATION IN THE CWC COMPLEX</scope>
    <scope>IDENTIFICATION BY MASS SPECTROMETRY</scope>
</reference>
<reference key="12">
    <citation type="journal article" date="2002" name="RNA">
        <title>Characterization of interactions among the Cef1p-Prp19p-associated splicing complex.</title>
        <authorList>
            <person name="Ohi M.D."/>
            <person name="Gould K.L."/>
        </authorList>
    </citation>
    <scope>INTERACTION WITH PRP19; PRP46 AND SYF1</scope>
</reference>
<reference key="13">
    <citation type="journal article" date="2003" name="Mol. Cell">
        <title>Assigning function to yeast proteins by integration of technologies.</title>
        <authorList>
            <person name="Hazbun T.R."/>
            <person name="Malmstroem L."/>
            <person name="Anderson S."/>
            <person name="Graczyk B.J."/>
            <person name="Fox B."/>
            <person name="Riffle M."/>
            <person name="Sundin B.A."/>
            <person name="Aranda J.D."/>
            <person name="McDonald W.H."/>
            <person name="Chiu C.-H."/>
            <person name="Snydsman B.E."/>
            <person name="Bradley P."/>
            <person name="Muller E.G.D."/>
            <person name="Fields S."/>
            <person name="Baker D."/>
            <person name="Yates J.R. III"/>
            <person name="Davis T.N."/>
        </authorList>
    </citation>
    <scope>IDENTIFICATION BY MASS SPECTROMETRY</scope>
</reference>
<reference key="14">
    <citation type="journal article" date="2003" name="Nature">
        <title>Global analysis of protein localization in budding yeast.</title>
        <authorList>
            <person name="Huh W.-K."/>
            <person name="Falvo J.V."/>
            <person name="Gerke L.C."/>
            <person name="Carroll A.S."/>
            <person name="Howson R.W."/>
            <person name="Weissman J.S."/>
            <person name="O'Shea E.K."/>
        </authorList>
    </citation>
    <scope>SUBCELLULAR LOCATION [LARGE SCALE ANALYSIS]</scope>
</reference>
<reference key="15">
    <citation type="journal article" date="2003" name="Nature">
        <title>Global analysis of protein expression in yeast.</title>
        <authorList>
            <person name="Ghaemmaghami S."/>
            <person name="Huh W.-K."/>
            <person name="Bower K."/>
            <person name="Howson R.W."/>
            <person name="Belle A."/>
            <person name="Dephoure N."/>
            <person name="O'Shea E.K."/>
            <person name="Weissman J.S."/>
        </authorList>
    </citation>
    <scope>LEVEL OF PROTEIN EXPRESSION [LARGE SCALE ANALYSIS]</scope>
</reference>
<sequence length="590" mass="67731">MPPVPIYVKGGVWTNVEDQILKAAVQKYGTHQWSKVASLLQKKTARQSELRWNEYLNPKLNFTEFSKEEDAQLLDLARELPNQWRTIADMMARPAQVCVERYNRLLESEDSGGAALSTGVTDLKAGDINPNAETQMARPDNGDLEDEEKEMLAEARARLLNTQGKKATRKIRERMLEESKRIAELQKRRELKQAGINVAIKKPKKKYGTDIDYNEDIVYEQAPMPGIYDTSTEDRQIKKKFEQFERKVNRKGLDGNKDKPSKKNKDKKRKHDENEHVEKAALGESTTLTDEYKKPKLILSAPGTKQGKVTYKKKLESKRQKLIEAQATGTVLTPKELLPHDSGQEDNERSNIKSGKQLKSRIRKFLVQMFASLPSPKNDFEIVLSEDEKEEDAEIAEYEKEFENERAMNEEDNFIEPPSQNDAPRVSLVAVPLAYSTLPIPEFKNNPQSAIDNKYNLLVANAINKEPHMVPEDTVDFLKEVESRMQHITQGRTSMKIQFKTAMPPTEVLLESIQSKVESIEQLQRKLQHVQPLEQQNNEMCSTLCHHSLPALIEGQRKYYADYYAYRQEIRSLEGRRKRLQAMLNSSSSI</sequence>
<keyword id="KW-0002">3D-structure</keyword>
<keyword id="KW-0963">Cytoplasm</keyword>
<keyword id="KW-0903">Direct protein sequencing</keyword>
<keyword id="KW-0238">DNA-binding</keyword>
<keyword id="KW-0507">mRNA processing</keyword>
<keyword id="KW-0508">mRNA splicing</keyword>
<keyword id="KW-0539">Nucleus</keyword>
<keyword id="KW-1185">Reference proteome</keyword>
<keyword id="KW-0677">Repeat</keyword>
<keyword id="KW-0747">Spliceosome</keyword>
<feature type="chain" id="PRO_0000197107" description="Pre-mRNA-splicing factor CEF1">
    <location>
        <begin position="1"/>
        <end position="590"/>
    </location>
</feature>
<feature type="domain" description="HTH myb-type 1" evidence="1">
    <location>
        <begin position="1"/>
        <end position="60"/>
    </location>
</feature>
<feature type="domain" description="HTH myb-type 2" evidence="1">
    <location>
        <begin position="63"/>
        <end position="110"/>
    </location>
</feature>
<feature type="DNA-binding region" description="H-T-H motif" evidence="1">
    <location>
        <begin position="33"/>
        <end position="56"/>
    </location>
</feature>
<feature type="DNA-binding region" description="H-T-H motif" evidence="1">
    <location>
        <begin position="84"/>
        <end position="106"/>
    </location>
</feature>
<feature type="region of interest" description="Disordered" evidence="2">
    <location>
        <begin position="244"/>
        <end position="286"/>
    </location>
</feature>
<feature type="region of interest" description="Disordered" evidence="2">
    <location>
        <begin position="336"/>
        <end position="355"/>
    </location>
</feature>
<feature type="region of interest" description="Interaction with PRP19 and self-interaction">
    <location>
        <begin position="460"/>
        <end position="490"/>
    </location>
</feature>
<feature type="compositionally biased region" description="Basic and acidic residues" evidence="2">
    <location>
        <begin position="244"/>
        <end position="263"/>
    </location>
</feature>
<feature type="compositionally biased region" description="Basic and acidic residues" evidence="2">
    <location>
        <begin position="271"/>
        <end position="281"/>
    </location>
</feature>
<feature type="compositionally biased region" description="Basic and acidic residues" evidence="2">
    <location>
        <begin position="337"/>
        <end position="351"/>
    </location>
</feature>
<feature type="mutagenesis site" description="No effect. Slower growth and thermosensitivity; when associated with G-84. Complete loss of function; when associated with G-52 and G-84. Complete loss of function; when associated with G-52; G-84 and G-102." evidence="13">
    <original>W</original>
    <variation>G</variation>
    <location>
        <position position="33"/>
    </location>
</feature>
<feature type="mutagenesis site" description="No effect. Slower growth and thermosensitivity; when associated with G-84. Complete loss of function; when associated with G-33 and G-84. Complete loss of function; when associated with G-33; G-84 and G-102." evidence="7 13">
    <original>W</original>
    <variation>G</variation>
    <location>
        <position position="52"/>
    </location>
</feature>
<feature type="mutagenesis site" description="No effect. Slower growth and thermosensitivity; when associated with G-33 or G-52. Complete loss of function; when associated with G-33 and G-52 or G-52 and Y-102. Complete loss of function; when associated with G-33; G-52 and G-102." evidence="7 13">
    <original>W</original>
    <variation>G</variation>
    <location>
        <position position="84"/>
    </location>
</feature>
<feature type="mutagenesis site" description="No effect. Slower growth and thermosensitivity; when associated with G-52 or G-84. Complete loss of function; when associated with G-33; G-52 and G-84." evidence="13">
    <original>Y</original>
    <variation>G</variation>
    <location>
        <position position="102"/>
    </location>
</feature>
<feature type="sequence conflict" description="In Ref. 4; AA sequence." evidence="14" ref="4">
    <original>G</original>
    <variation>E</variation>
    <location>
        <position position="11"/>
    </location>
</feature>
<feature type="sequence conflict" description="In Ref. 3; AAT93161." evidence="14" ref="3">
    <original>K</original>
    <variation>E</variation>
    <location>
        <position position="192"/>
    </location>
</feature>
<feature type="helix" evidence="17">
    <location>
        <begin position="15"/>
        <end position="28"/>
    </location>
</feature>
<feature type="helix" evidence="17">
    <location>
        <begin position="33"/>
        <end position="37"/>
    </location>
</feature>
<feature type="helix" evidence="17">
    <location>
        <begin position="45"/>
        <end position="54"/>
    </location>
</feature>
<feature type="helix" evidence="17">
    <location>
        <begin position="67"/>
        <end position="79"/>
    </location>
</feature>
<feature type="strand" evidence="15">
    <location>
        <begin position="80"/>
        <end position="82"/>
    </location>
</feature>
<feature type="helix" evidence="17">
    <location>
        <begin position="84"/>
        <end position="91"/>
    </location>
</feature>
<feature type="helix" evidence="17">
    <location>
        <begin position="95"/>
        <end position="106"/>
    </location>
</feature>
<feature type="strand" evidence="16">
    <location>
        <begin position="107"/>
        <end position="109"/>
    </location>
</feature>
<feature type="helix" evidence="17">
    <location>
        <begin position="132"/>
        <end position="134"/>
    </location>
</feature>
<feature type="helix" evidence="17">
    <location>
        <begin position="146"/>
        <end position="160"/>
    </location>
</feature>
<feature type="helix" evidence="17">
    <location>
        <begin position="165"/>
        <end position="193"/>
    </location>
</feature>
<feature type="turn" evidence="16">
    <location>
        <begin position="213"/>
        <end position="215"/>
    </location>
</feature>
<feature type="helix" evidence="17">
    <location>
        <begin position="231"/>
        <end position="251"/>
    </location>
</feature>
<feature type="strand" evidence="16">
    <location>
        <begin position="335"/>
        <end position="337"/>
    </location>
</feature>
<feature type="helix" evidence="16">
    <location>
        <begin position="338"/>
        <end position="355"/>
    </location>
</feature>
<feature type="helix" evidence="17">
    <location>
        <begin position="363"/>
        <end position="371"/>
    </location>
</feature>
<feature type="helix" evidence="16">
    <location>
        <begin position="374"/>
        <end position="379"/>
    </location>
</feature>
<feature type="helix" evidence="16">
    <location>
        <begin position="388"/>
        <end position="400"/>
    </location>
</feature>
<feature type="helix" evidence="15">
    <location>
        <begin position="402"/>
        <end position="409"/>
    </location>
</feature>
<feature type="turn" evidence="16">
    <location>
        <begin position="423"/>
        <end position="425"/>
    </location>
</feature>
<feature type="strand" evidence="17">
    <location>
        <begin position="428"/>
        <end position="431"/>
    </location>
</feature>
<feature type="turn" evidence="17">
    <location>
        <begin position="434"/>
        <end position="437"/>
    </location>
</feature>
<feature type="helix" evidence="17">
    <location>
        <begin position="450"/>
        <end position="464"/>
    </location>
</feature>
<feature type="strand" evidence="17">
    <location>
        <begin position="468"/>
        <end position="471"/>
    </location>
</feature>
<feature type="helix" evidence="17">
    <location>
        <begin position="472"/>
        <end position="489"/>
    </location>
</feature>
<feature type="helix" evidence="17">
    <location>
        <begin position="507"/>
        <end position="526"/>
    </location>
</feature>
<feature type="helix" evidence="17">
    <location>
        <begin position="527"/>
        <end position="530"/>
    </location>
</feature>
<feature type="helix" evidence="17">
    <location>
        <begin position="531"/>
        <end position="546"/>
    </location>
</feature>
<feature type="helix" evidence="17">
    <location>
        <begin position="548"/>
        <end position="588"/>
    </location>
</feature>
<protein>
    <recommendedName>
        <fullName>Pre-mRNA-splicing factor CEF1</fullName>
    </recommendedName>
    <alternativeName>
        <fullName>PRP nineteen-associated complex protein 85</fullName>
    </alternativeName>
    <alternativeName>
        <fullName>PRP19-associated complex protein 85</fullName>
    </alternativeName>
</protein>
<proteinExistence type="evidence at protein level"/>
<accession>Q03654</accession>
<accession>D6W038</accession>
<accession>Q6B1D8</accession>
<comment type="function">
    <text evidence="3 4 7 13">Involved in pre-mRNA splicing and cell cycle control. Required for the binding of the NTC complex (or PRP19-associated complex) components to the spliceosome to mediate conformational rearrangement or to stabilize the structure of the spliceosome after U4 snRNA dissociation, which leads to spliceosome maturation. Its absence leads to an arrest of the cell cycle, possibly due to the inefficient splicing of TUB1.</text>
</comment>
<comment type="subunit">
    <text evidence="3 5 6 8 9 12">Belongs to the NTC complex (or PRP19-associated complex), composed of at least CEF1, CLF1, ISY1, NTC20, SNT309, SYF1, SYF2, and PRP19. The NTC complex associates with the spliceosome after the release of the U1 and U4 snRNAs and forms the CWC spliceosome subcomplex (or CEF1-associated complex) reminiscent of a late-stage spliceosome composed also of the U2, U5 and U6 snRNAs and at least BUD13, BUD31, BRR2, CDC40, CUS1, CWC2, CWC15, CWC21, CWC22, CWC23, CWC24, CWC25, CWC27, ECM2, HSH155, IST3, LEA1, MSL1, PRP8, PRP9, PRP11, PRP21, PRP22, PRP45, PRP46, SLU7, SMB1, SMD1, SMD2, SMD3, SMX2, SMX3, SNU114, SPP2, RSE1 and YJU2. Interacts with CLF1, ISY1, NTC20, PRP19, PRP46, SYF1 and SYF2.</text>
</comment>
<comment type="interaction">
    <interactant intactId="EBI-476">
        <id>Q03654</id>
    </interactant>
    <interactant intactId="EBI-547">
        <id>P25337</id>
        <label>BUD31</label>
    </interactant>
    <organismsDiffer>false</organismsDiffer>
    <experiments>13</experiments>
</comment>
<comment type="interaction">
    <interactant intactId="EBI-476">
        <id>Q03654</id>
    </interactant>
    <interactant intactId="EBI-484">
        <id>Q12309</id>
        <label>CLF1</label>
    </interactant>
    <organismsDiffer>false</organismsDiffer>
    <experiments>9</experiments>
</comment>
<comment type="interaction">
    <interactant intactId="EBI-476">
        <id>Q03654</id>
    </interactant>
    <interactant intactId="EBI-36780">
        <id>Q03772</id>
        <label>CWC15</label>
    </interactant>
    <organismsDiffer>false</organismsDiffer>
    <experiments>4</experiments>
</comment>
<comment type="interaction">
    <interactant intactId="EBI-476">
        <id>Q03654</id>
    </interactant>
    <interactant intactId="EBI-20921">
        <id>P38302</id>
        <label>NTC20</label>
    </interactant>
    <organismsDiffer>false</organismsDiffer>
    <experiments>5</experiments>
</comment>
<comment type="interaction">
    <interactant intactId="EBI-476">
        <id>Q03654</id>
    </interactant>
    <interactant intactId="EBI-493">
        <id>P32523</id>
        <label>PRP19</label>
    </interactant>
    <organismsDiffer>false</organismsDiffer>
    <experiments>10</experiments>
</comment>
<comment type="interaction">
    <interactant intactId="EBI-476">
        <id>Q03654</id>
    </interactant>
    <interactant intactId="EBI-576">
        <id>Q06411</id>
        <label>SPP382</label>
    </interactant>
    <organismsDiffer>false</organismsDiffer>
    <experiments>3</experiments>
</comment>
<comment type="interaction">
    <interactant intactId="EBI-476">
        <id>Q03654</id>
    </interactant>
    <interactant intactId="EBI-540">
        <id>Q04048</id>
        <label>SYF1</label>
    </interactant>
    <organismsDiffer>false</organismsDiffer>
    <experiments>6</experiments>
</comment>
<comment type="interaction">
    <interactant intactId="EBI-476">
        <id>Q03654</id>
    </interactant>
    <interactant intactId="EBI-23308">
        <id>P53277</id>
        <label>SYF2</label>
    </interactant>
    <organismsDiffer>false</organismsDiffer>
    <experiments>4</experiments>
</comment>
<comment type="subcellular location">
    <subcellularLocation>
        <location evidence="10">Cytoplasm</location>
    </subcellularLocation>
    <subcellularLocation>
        <location evidence="1 10">Nucleus</location>
    </subcellularLocation>
</comment>
<comment type="miscellaneous">
    <text evidence="11">Present with 784 molecules/cell in log phase SD medium.</text>
</comment>
<comment type="similarity">
    <text evidence="14">Belongs to the CEF1 family.</text>
</comment>
<organism>
    <name type="scientific">Saccharomyces cerevisiae (strain ATCC 204508 / S288c)</name>
    <name type="common">Baker's yeast</name>
    <dbReference type="NCBI Taxonomy" id="559292"/>
    <lineage>
        <taxon>Eukaryota</taxon>
        <taxon>Fungi</taxon>
        <taxon>Dikarya</taxon>
        <taxon>Ascomycota</taxon>
        <taxon>Saccharomycotina</taxon>
        <taxon>Saccharomycetes</taxon>
        <taxon>Saccharomycetales</taxon>
        <taxon>Saccharomycetaceae</taxon>
        <taxon>Saccharomyces</taxon>
    </lineage>
</organism>
<gene>
    <name type="primary">CEF1</name>
    <name type="synonym">NTC85</name>
    <name type="ordered locus">YMR213W</name>
    <name type="ORF">YM8261.07</name>
</gene>